<name>FAR3_AUSGA</name>
<proteinExistence type="evidence at protein level"/>
<sequence length="9" mass="1005">GPDSTFLRL</sequence>
<organism>
    <name type="scientific">Austrophasma gansbaaiense</name>
    <name type="common">Gladiator</name>
    <name type="synonym">Heel-walker</name>
    <dbReference type="NCBI Taxonomy" id="253136"/>
    <lineage>
        <taxon>Eukaryota</taxon>
        <taxon>Metazoa</taxon>
        <taxon>Ecdysozoa</taxon>
        <taxon>Arthropoda</taxon>
        <taxon>Hexapoda</taxon>
        <taxon>Insecta</taxon>
        <taxon>Pterygota</taxon>
        <taxon>Neoptera</taxon>
        <taxon>Polyneoptera</taxon>
        <taxon>Mantophasmatodea</taxon>
        <taxon>Austrophasmatidae</taxon>
        <taxon>Austrophasma</taxon>
    </lineage>
</organism>
<accession>B3A0E1</accession>
<protein>
    <recommendedName>
        <fullName evidence="4">Extended FMRFamide-3</fullName>
        <shortName evidence="4">FMRFa-3</shortName>
    </recommendedName>
</protein>
<reference evidence="5" key="1">
    <citation type="journal article" date="2012" name="Syst. Biol.">
        <title>Peptidomics-based phylogeny and biogeography of Mantophasmatodea (Hexapoda).</title>
        <authorList>
            <person name="Predel R."/>
            <person name="Neupert S."/>
            <person name="Huetteroth W."/>
            <person name="Kahnt J."/>
            <person name="Waidelich D."/>
            <person name="Roth S."/>
        </authorList>
    </citation>
    <scope>PROTEIN SEQUENCE</scope>
    <scope>AMIDATION AT LEU-9</scope>
    <source>
        <tissue evidence="3">Thoracic perisympathetic organs</tissue>
    </source>
</reference>
<feature type="peptide" id="PRO_0000421493" description="Extended FMRFamide-3" evidence="3">
    <location>
        <begin position="1"/>
        <end position="9"/>
    </location>
</feature>
<feature type="modified residue" description="Leucine amide" evidence="3">
    <location>
        <position position="9"/>
    </location>
</feature>
<feature type="unsure residue" description="L or I" evidence="3">
    <location>
        <position position="7"/>
    </location>
</feature>
<feature type="unsure residue" description="L or I" evidence="3">
    <location>
        <position position="9"/>
    </location>
</feature>
<dbReference type="GO" id="GO:0005576">
    <property type="term" value="C:extracellular region"/>
    <property type="evidence" value="ECO:0007669"/>
    <property type="project" value="UniProtKB-SubCell"/>
</dbReference>
<dbReference type="GO" id="GO:0007218">
    <property type="term" value="P:neuropeptide signaling pathway"/>
    <property type="evidence" value="ECO:0007669"/>
    <property type="project" value="UniProtKB-KW"/>
</dbReference>
<evidence type="ECO:0000250" key="1">
    <source>
        <dbReference type="UniProtKB" id="P34405"/>
    </source>
</evidence>
<evidence type="ECO:0000255" key="2"/>
<evidence type="ECO:0000269" key="3">
    <source>
    </source>
</evidence>
<evidence type="ECO:0000303" key="4">
    <source>
    </source>
</evidence>
<evidence type="ECO:0000305" key="5"/>
<evidence type="ECO:0000305" key="6">
    <source>
    </source>
</evidence>
<comment type="function">
    <text evidence="1">FMRFamides and FMRFamide-like peptides are neuropeptides.</text>
</comment>
<comment type="subcellular location">
    <subcellularLocation>
        <location evidence="6">Secreted</location>
    </subcellularLocation>
</comment>
<comment type="similarity">
    <text evidence="2">Belongs to the FARP (FMRF amide related peptide) family.</text>
</comment>
<keyword id="KW-0027">Amidation</keyword>
<keyword id="KW-0903">Direct protein sequencing</keyword>
<keyword id="KW-0527">Neuropeptide</keyword>
<keyword id="KW-0964">Secreted</keyword>